<dbReference type="EC" id="5.6.1.7" evidence="1"/>
<dbReference type="EMBL" id="AB008149">
    <property type="protein sequence ID" value="BAA25231.1"/>
    <property type="molecule type" value="Genomic_DNA"/>
</dbReference>
<dbReference type="SMR" id="O66214"/>
<dbReference type="STRING" id="54291.TE10_04250"/>
<dbReference type="PaxDb" id="1286170-RORB6_16840"/>
<dbReference type="eggNOG" id="COG0459">
    <property type="taxonomic scope" value="Bacteria"/>
</dbReference>
<dbReference type="GO" id="GO:0005737">
    <property type="term" value="C:cytoplasm"/>
    <property type="evidence" value="ECO:0007669"/>
    <property type="project" value="UniProtKB-SubCell"/>
</dbReference>
<dbReference type="GO" id="GO:0005524">
    <property type="term" value="F:ATP binding"/>
    <property type="evidence" value="ECO:0007669"/>
    <property type="project" value="UniProtKB-KW"/>
</dbReference>
<dbReference type="GO" id="GO:0140662">
    <property type="term" value="F:ATP-dependent protein folding chaperone"/>
    <property type="evidence" value="ECO:0007669"/>
    <property type="project" value="InterPro"/>
</dbReference>
<dbReference type="GO" id="GO:0016853">
    <property type="term" value="F:isomerase activity"/>
    <property type="evidence" value="ECO:0007669"/>
    <property type="project" value="UniProtKB-KW"/>
</dbReference>
<dbReference type="GO" id="GO:0042026">
    <property type="term" value="P:protein refolding"/>
    <property type="evidence" value="ECO:0007669"/>
    <property type="project" value="InterPro"/>
</dbReference>
<dbReference type="CDD" id="cd03344">
    <property type="entry name" value="GroEL"/>
    <property type="match status" value="1"/>
</dbReference>
<dbReference type="FunFam" id="1.10.560.10:FF:000001">
    <property type="entry name" value="60 kDa chaperonin"/>
    <property type="match status" value="1"/>
</dbReference>
<dbReference type="FunFam" id="3.50.7.10:FF:000001">
    <property type="entry name" value="60 kDa chaperonin"/>
    <property type="match status" value="1"/>
</dbReference>
<dbReference type="Gene3D" id="3.50.7.10">
    <property type="entry name" value="GroEL"/>
    <property type="match status" value="1"/>
</dbReference>
<dbReference type="Gene3D" id="1.10.560.10">
    <property type="entry name" value="GroEL-like equatorial domain"/>
    <property type="match status" value="1"/>
</dbReference>
<dbReference type="Gene3D" id="3.30.260.10">
    <property type="entry name" value="TCP-1-like chaperonin intermediate domain"/>
    <property type="match status" value="1"/>
</dbReference>
<dbReference type="HAMAP" id="MF_00600">
    <property type="entry name" value="CH60"/>
    <property type="match status" value="1"/>
</dbReference>
<dbReference type="InterPro" id="IPR018370">
    <property type="entry name" value="Chaperonin_Cpn60_CS"/>
</dbReference>
<dbReference type="InterPro" id="IPR001844">
    <property type="entry name" value="Cpn60/GroEL"/>
</dbReference>
<dbReference type="InterPro" id="IPR002423">
    <property type="entry name" value="Cpn60/GroEL/TCP-1"/>
</dbReference>
<dbReference type="InterPro" id="IPR027409">
    <property type="entry name" value="GroEL-like_apical_dom_sf"/>
</dbReference>
<dbReference type="InterPro" id="IPR027413">
    <property type="entry name" value="GROEL-like_equatorial_sf"/>
</dbReference>
<dbReference type="InterPro" id="IPR027410">
    <property type="entry name" value="TCP-1-like_intermed_sf"/>
</dbReference>
<dbReference type="NCBIfam" id="TIGR02348">
    <property type="entry name" value="GroEL"/>
    <property type="match status" value="1"/>
</dbReference>
<dbReference type="NCBIfam" id="NF000592">
    <property type="entry name" value="PRK00013.1"/>
    <property type="match status" value="1"/>
</dbReference>
<dbReference type="NCBIfam" id="NF009487">
    <property type="entry name" value="PRK12849.1"/>
    <property type="match status" value="1"/>
</dbReference>
<dbReference type="NCBIfam" id="NF009488">
    <property type="entry name" value="PRK12850.1"/>
    <property type="match status" value="1"/>
</dbReference>
<dbReference type="NCBIfam" id="NF009489">
    <property type="entry name" value="PRK12851.1"/>
    <property type="match status" value="1"/>
</dbReference>
<dbReference type="PANTHER" id="PTHR45633">
    <property type="entry name" value="60 KDA HEAT SHOCK PROTEIN, MITOCHONDRIAL"/>
    <property type="match status" value="1"/>
</dbReference>
<dbReference type="Pfam" id="PF00118">
    <property type="entry name" value="Cpn60_TCP1"/>
    <property type="match status" value="1"/>
</dbReference>
<dbReference type="PRINTS" id="PR00298">
    <property type="entry name" value="CHAPERONIN60"/>
</dbReference>
<dbReference type="SUPFAM" id="SSF52029">
    <property type="entry name" value="GroEL apical domain-like"/>
    <property type="match status" value="1"/>
</dbReference>
<dbReference type="SUPFAM" id="SSF48592">
    <property type="entry name" value="GroEL equatorial domain-like"/>
    <property type="match status" value="1"/>
</dbReference>
<dbReference type="SUPFAM" id="SSF54849">
    <property type="entry name" value="GroEL-intermediate domain like"/>
    <property type="match status" value="1"/>
</dbReference>
<dbReference type="PROSITE" id="PS00296">
    <property type="entry name" value="CHAPERONINS_CPN60"/>
    <property type="match status" value="1"/>
</dbReference>
<name>CH60_RAOOR</name>
<feature type="chain" id="PRO_0000063393" description="Chaperonin GroEL">
    <location>
        <begin position="1"/>
        <end position="540" status="greater than"/>
    </location>
</feature>
<feature type="binding site" evidence="1">
    <location>
        <begin position="30"/>
        <end position="33"/>
    </location>
    <ligand>
        <name>ATP</name>
        <dbReference type="ChEBI" id="CHEBI:30616"/>
    </ligand>
</feature>
<feature type="binding site" evidence="1">
    <location>
        <position position="51"/>
    </location>
    <ligand>
        <name>ATP</name>
        <dbReference type="ChEBI" id="CHEBI:30616"/>
    </ligand>
</feature>
<feature type="binding site" evidence="1">
    <location>
        <begin position="87"/>
        <end position="91"/>
    </location>
    <ligand>
        <name>ATP</name>
        <dbReference type="ChEBI" id="CHEBI:30616"/>
    </ligand>
</feature>
<feature type="binding site" evidence="1">
    <location>
        <position position="415"/>
    </location>
    <ligand>
        <name>ATP</name>
        <dbReference type="ChEBI" id="CHEBI:30616"/>
    </ligand>
</feature>
<feature type="binding site" evidence="1">
    <location>
        <begin position="479"/>
        <end position="481"/>
    </location>
    <ligand>
        <name>ATP</name>
        <dbReference type="ChEBI" id="CHEBI:30616"/>
    </ligand>
</feature>
<feature type="binding site" evidence="1">
    <location>
        <position position="495"/>
    </location>
    <ligand>
        <name>ATP</name>
        <dbReference type="ChEBI" id="CHEBI:30616"/>
    </ligand>
</feature>
<feature type="non-terminal residue">
    <location>
        <position position="540"/>
    </location>
</feature>
<protein>
    <recommendedName>
        <fullName evidence="1">Chaperonin GroEL</fullName>
        <ecNumber evidence="1">5.6.1.7</ecNumber>
    </recommendedName>
    <alternativeName>
        <fullName evidence="1">60 kDa chaperonin</fullName>
    </alternativeName>
    <alternativeName>
        <fullName evidence="1">Chaperonin-60</fullName>
        <shortName evidence="1">Cpn60</shortName>
    </alternativeName>
</protein>
<gene>
    <name evidence="1" type="primary">groEL</name>
    <name evidence="1" type="synonym">groL</name>
    <name type="synonym">mopA</name>
</gene>
<proteinExistence type="inferred from homology"/>
<sequence length="540" mass="56362">MAAKDVKFGNDARVKMLRGVNVLADAVKVTLGPKGRNVVLDKSFGAPTITKDGVSVAREIELEDKFENMGAQMVKEVASKANDAAGDGTTTATVLAQAIIAEGLKAVAAGMNPMDLKRGIDKAVVAAVEELKTLSVPCSDSKAIAQVGTISANSDETVGKLIAEAMDKVGKEGVITVEDGTGLEDELDVVEGMQFDRGYLSPYFINKPETGAVELESPFILLADKKVSNIREMLPVLEAVAKAGKPLVIIAEDVEGEALATLVVNTMRGIVKVAAVKAPGFGDRRKAMLQDIATLTGGTVISEEIGMELEKATLEDLGQAKRVVINKDTTTIIDGVGEEGAIQGRVAQIRKQIEEATSDYDREKLQERVAKLAGGVAVIKVGAATEVEMKEKKARVDDALHATRAAVEEGVVAGGGVALVRVAAKLAGLTAQNEDQNVGIKVALRAMEAPLRQIVSNAGEEPSVVANNVKAGEGNYGYNAATEEYGNMIDFGILDPTKVTRSALQYAASVAGLMITTECMVTDLPKSDAADLGAAGGMGG</sequence>
<accession>O66214</accession>
<comment type="function">
    <text evidence="1">Together with its co-chaperonin GroES, plays an essential role in assisting protein folding. The GroEL-GroES system forms a nano-cage that allows encapsulation of the non-native substrate proteins and provides a physical environment optimized to promote and accelerate protein folding.</text>
</comment>
<comment type="catalytic activity">
    <reaction evidence="1">
        <text>ATP + H2O + a folded polypeptide = ADP + phosphate + an unfolded polypeptide.</text>
        <dbReference type="EC" id="5.6.1.7"/>
    </reaction>
</comment>
<comment type="subunit">
    <text evidence="1">Forms a cylinder of 14 subunits composed of two heptameric rings stacked back-to-back. Interacts with the co-chaperonin GroES.</text>
</comment>
<comment type="subcellular location">
    <subcellularLocation>
        <location evidence="1">Cytoplasm</location>
    </subcellularLocation>
</comment>
<comment type="similarity">
    <text evidence="1">Belongs to the chaperonin (HSP60) family.</text>
</comment>
<reference key="1">
    <citation type="journal article" date="1997" name="J. Gen. Appl. Microbiol.">
        <title>Phylogenetical relationship based on groE genes among phenotypically related Enterobacter, Pantoea, Klebsiella, Serratia, and Erwinia species.</title>
        <authorList>
            <person name="Harada H."/>
            <person name="Ishikawa H."/>
        </authorList>
    </citation>
    <scope>NUCLEOTIDE SEQUENCE [GENOMIC DNA]</scope>
    <source>
        <strain>ATCC 31898 / DSM 7464 / JCM 6096 / NBRC 105727 / 90-72</strain>
    </source>
</reference>
<keyword id="KW-0067">ATP-binding</keyword>
<keyword id="KW-0143">Chaperone</keyword>
<keyword id="KW-0963">Cytoplasm</keyword>
<keyword id="KW-0413">Isomerase</keyword>
<keyword id="KW-0547">Nucleotide-binding</keyword>
<organism>
    <name type="scientific">Raoultella ornithinolytica</name>
    <name type="common">Klebsiella ornithinolytica</name>
    <dbReference type="NCBI Taxonomy" id="54291"/>
    <lineage>
        <taxon>Bacteria</taxon>
        <taxon>Pseudomonadati</taxon>
        <taxon>Pseudomonadota</taxon>
        <taxon>Gammaproteobacteria</taxon>
        <taxon>Enterobacterales</taxon>
        <taxon>Enterobacteriaceae</taxon>
        <taxon>Klebsiella/Raoultella group</taxon>
        <taxon>Raoultella</taxon>
    </lineage>
</organism>
<evidence type="ECO:0000255" key="1">
    <source>
        <dbReference type="HAMAP-Rule" id="MF_00600"/>
    </source>
</evidence>